<keyword id="KW-0002">3D-structure</keyword>
<keyword id="KW-0963">Cytoplasm</keyword>
<keyword id="KW-0496">Mitochondrion</keyword>
<keyword id="KW-0539">Nucleus</keyword>
<keyword id="KW-0597">Phosphoprotein</keyword>
<keyword id="KW-1267">Proteomics identification</keyword>
<keyword id="KW-1185">Reference proteome</keyword>
<keyword id="KW-0727">SH2 domain</keyword>
<reference key="1">
    <citation type="journal article" date="1999" name="Proc. Natl. Acad. Sci. U.S.A.">
        <title>Molecular cloning of a docking protein, BRDG1, that acts downstream of the Tec tyrosine kinase.</title>
        <authorList>
            <person name="Ohya K."/>
            <person name="Kajigaya S."/>
            <person name="Kitanaka A."/>
            <person name="Yoshida K."/>
            <person name="Miyazato A."/>
            <person name="Yamashita Y."/>
            <person name="Yamanaka T."/>
            <person name="Ikeda U."/>
            <person name="Shimada K."/>
            <person name="Ozawa K."/>
            <person name="Mano H."/>
        </authorList>
    </citation>
    <scope>NUCLEOTIDE SEQUENCE [MRNA]</scope>
    <scope>FUNCTION</scope>
    <scope>PHOSPHORYLATION BY TEC</scope>
    <source>
        <tissue>Hematopoietic</tissue>
    </source>
</reference>
<reference key="2">
    <citation type="journal article" date="2004" name="Nat. Genet.">
        <title>Complete sequencing and characterization of 21,243 full-length human cDNAs.</title>
        <authorList>
            <person name="Ota T."/>
            <person name="Suzuki Y."/>
            <person name="Nishikawa T."/>
            <person name="Otsuki T."/>
            <person name="Sugiyama T."/>
            <person name="Irie R."/>
            <person name="Wakamatsu A."/>
            <person name="Hayashi K."/>
            <person name="Sato H."/>
            <person name="Nagai K."/>
            <person name="Kimura K."/>
            <person name="Makita H."/>
            <person name="Sekine M."/>
            <person name="Obayashi M."/>
            <person name="Nishi T."/>
            <person name="Shibahara T."/>
            <person name="Tanaka T."/>
            <person name="Ishii S."/>
            <person name="Yamamoto J."/>
            <person name="Saito K."/>
            <person name="Kawai Y."/>
            <person name="Isono Y."/>
            <person name="Nakamura Y."/>
            <person name="Nagahari K."/>
            <person name="Murakami K."/>
            <person name="Yasuda T."/>
            <person name="Iwayanagi T."/>
            <person name="Wagatsuma M."/>
            <person name="Shiratori A."/>
            <person name="Sudo H."/>
            <person name="Hosoiri T."/>
            <person name="Kaku Y."/>
            <person name="Kodaira H."/>
            <person name="Kondo H."/>
            <person name="Sugawara M."/>
            <person name="Takahashi M."/>
            <person name="Kanda K."/>
            <person name="Yokoi T."/>
            <person name="Furuya T."/>
            <person name="Kikkawa E."/>
            <person name="Omura Y."/>
            <person name="Abe K."/>
            <person name="Kamihara K."/>
            <person name="Katsuta N."/>
            <person name="Sato K."/>
            <person name="Tanikawa M."/>
            <person name="Yamazaki M."/>
            <person name="Ninomiya K."/>
            <person name="Ishibashi T."/>
            <person name="Yamashita H."/>
            <person name="Murakawa K."/>
            <person name="Fujimori K."/>
            <person name="Tanai H."/>
            <person name="Kimata M."/>
            <person name="Watanabe M."/>
            <person name="Hiraoka S."/>
            <person name="Chiba Y."/>
            <person name="Ishida S."/>
            <person name="Ono Y."/>
            <person name="Takiguchi S."/>
            <person name="Watanabe S."/>
            <person name="Yosida M."/>
            <person name="Hotuta T."/>
            <person name="Kusano J."/>
            <person name="Kanehori K."/>
            <person name="Takahashi-Fujii A."/>
            <person name="Hara H."/>
            <person name="Tanase T.-O."/>
            <person name="Nomura Y."/>
            <person name="Togiya S."/>
            <person name="Komai F."/>
            <person name="Hara R."/>
            <person name="Takeuchi K."/>
            <person name="Arita M."/>
            <person name="Imose N."/>
            <person name="Musashino K."/>
            <person name="Yuuki H."/>
            <person name="Oshima A."/>
            <person name="Sasaki N."/>
            <person name="Aotsuka S."/>
            <person name="Yoshikawa Y."/>
            <person name="Matsunawa H."/>
            <person name="Ichihara T."/>
            <person name="Shiohata N."/>
            <person name="Sano S."/>
            <person name="Moriya S."/>
            <person name="Momiyama H."/>
            <person name="Satoh N."/>
            <person name="Takami S."/>
            <person name="Terashima Y."/>
            <person name="Suzuki O."/>
            <person name="Nakagawa S."/>
            <person name="Senoh A."/>
            <person name="Mizoguchi H."/>
            <person name="Goto Y."/>
            <person name="Shimizu F."/>
            <person name="Wakebe H."/>
            <person name="Hishigaki H."/>
            <person name="Watanabe T."/>
            <person name="Sugiyama A."/>
            <person name="Takemoto M."/>
            <person name="Kawakami B."/>
            <person name="Yamazaki M."/>
            <person name="Watanabe K."/>
            <person name="Kumagai A."/>
            <person name="Itakura S."/>
            <person name="Fukuzumi Y."/>
            <person name="Fujimori Y."/>
            <person name="Komiyama M."/>
            <person name="Tashiro H."/>
            <person name="Tanigami A."/>
            <person name="Fujiwara T."/>
            <person name="Ono T."/>
            <person name="Yamada K."/>
            <person name="Fujii Y."/>
            <person name="Ozaki K."/>
            <person name="Hirao M."/>
            <person name="Ohmori Y."/>
            <person name="Kawabata A."/>
            <person name="Hikiji T."/>
            <person name="Kobatake N."/>
            <person name="Inagaki H."/>
            <person name="Ikema Y."/>
            <person name="Okamoto S."/>
            <person name="Okitani R."/>
            <person name="Kawakami T."/>
            <person name="Noguchi S."/>
            <person name="Itoh T."/>
            <person name="Shigeta K."/>
            <person name="Senba T."/>
            <person name="Matsumura K."/>
            <person name="Nakajima Y."/>
            <person name="Mizuno T."/>
            <person name="Morinaga M."/>
            <person name="Sasaki M."/>
            <person name="Togashi T."/>
            <person name="Oyama M."/>
            <person name="Hata H."/>
            <person name="Watanabe M."/>
            <person name="Komatsu T."/>
            <person name="Mizushima-Sugano J."/>
            <person name="Satoh T."/>
            <person name="Shirai Y."/>
            <person name="Takahashi Y."/>
            <person name="Nakagawa K."/>
            <person name="Okumura K."/>
            <person name="Nagase T."/>
            <person name="Nomura N."/>
            <person name="Kikuchi H."/>
            <person name="Masuho Y."/>
            <person name="Yamashita R."/>
            <person name="Nakai K."/>
            <person name="Yada T."/>
            <person name="Nakamura Y."/>
            <person name="Ohara O."/>
            <person name="Isogai T."/>
            <person name="Sugano S."/>
        </authorList>
    </citation>
    <scope>NUCLEOTIDE SEQUENCE [LARGE SCALE MRNA]</scope>
    <source>
        <tissue>Thalamus</tissue>
    </source>
</reference>
<reference key="3">
    <citation type="submission" date="2005-07" db="EMBL/GenBank/DDBJ databases">
        <authorList>
            <person name="Mural R.J."/>
            <person name="Istrail S."/>
            <person name="Sutton G.G."/>
            <person name="Florea L."/>
            <person name="Halpern A.L."/>
            <person name="Mobarry C.M."/>
            <person name="Lippert R."/>
            <person name="Walenz B."/>
            <person name="Shatkay H."/>
            <person name="Dew I."/>
            <person name="Miller J.R."/>
            <person name="Flanigan M.J."/>
            <person name="Edwards N.J."/>
            <person name="Bolanos R."/>
            <person name="Fasulo D."/>
            <person name="Halldorsson B.V."/>
            <person name="Hannenhalli S."/>
            <person name="Turner R."/>
            <person name="Yooseph S."/>
            <person name="Lu F."/>
            <person name="Nusskern D.R."/>
            <person name="Shue B.C."/>
            <person name="Zheng X.H."/>
            <person name="Zhong F."/>
            <person name="Delcher A.L."/>
            <person name="Huson D.H."/>
            <person name="Kravitz S.A."/>
            <person name="Mouchard L."/>
            <person name="Reinert K."/>
            <person name="Remington K.A."/>
            <person name="Clark A.G."/>
            <person name="Waterman M.S."/>
            <person name="Eichler E.E."/>
            <person name="Adams M.D."/>
            <person name="Hunkapiller M.W."/>
            <person name="Myers E.W."/>
            <person name="Venter J.C."/>
        </authorList>
    </citation>
    <scope>NUCLEOTIDE SEQUENCE [LARGE SCALE GENOMIC DNA]</scope>
</reference>
<reference key="4">
    <citation type="journal article" date="2004" name="Genome Res.">
        <title>The status, quality, and expansion of the NIH full-length cDNA project: the Mammalian Gene Collection (MGC).</title>
        <authorList>
            <consortium name="The MGC Project Team"/>
        </authorList>
    </citation>
    <scope>NUCLEOTIDE SEQUENCE [LARGE SCALE MRNA]</scope>
    <source>
        <tissue>B-cell</tissue>
    </source>
</reference>
<reference key="5">
    <citation type="journal article" date="2007" name="Mol. Cell">
        <title>S6K1-mediated disassembly of mitochondrial URI/PP1gamma complexes activates a negative feedback program that counters S6K1 survival signaling.</title>
        <authorList>
            <person name="Djouder N."/>
            <person name="Metzler S.C."/>
            <person name="Schmidt A."/>
            <person name="Wirbelauer C."/>
            <person name="Gstaiger M."/>
            <person name="Aebersold R."/>
            <person name="Hess D."/>
            <person name="Krek W."/>
        </authorList>
    </citation>
    <scope>INTERACTION WITH URI1</scope>
    <scope>SUBCELLULAR LOCATION</scope>
</reference>
<reference key="6">
    <citation type="journal article" date="2011" name="BMC Syst. Biol.">
        <title>Initial characterization of the human central proteome.</title>
        <authorList>
            <person name="Burkard T.R."/>
            <person name="Planyavsky M."/>
            <person name="Kaupe I."/>
            <person name="Breitwieser F.P."/>
            <person name="Buerckstuemmer T."/>
            <person name="Bennett K.L."/>
            <person name="Superti-Furga G."/>
            <person name="Colinge J."/>
        </authorList>
    </citation>
    <scope>IDENTIFICATION BY MASS SPECTROMETRY [LARGE SCALE ANALYSIS]</scope>
</reference>
<reference key="7">
    <citation type="submission" date="2005-10" db="PDB data bank">
        <title>Solution structure of the PH domain of human docking protein BRDG1.</title>
        <authorList>
            <consortium name="RIKEN structural genomics initiative (RSGI)"/>
        </authorList>
    </citation>
    <scope>STRUCTURE BY NMR OF 16-151</scope>
</reference>
<proteinExistence type="evidence at protein level"/>
<organism>
    <name type="scientific">Homo sapiens</name>
    <name type="common">Human</name>
    <dbReference type="NCBI Taxonomy" id="9606"/>
    <lineage>
        <taxon>Eukaryota</taxon>
        <taxon>Metazoa</taxon>
        <taxon>Chordata</taxon>
        <taxon>Craniata</taxon>
        <taxon>Vertebrata</taxon>
        <taxon>Euteleostomi</taxon>
        <taxon>Mammalia</taxon>
        <taxon>Eutheria</taxon>
        <taxon>Euarchontoglires</taxon>
        <taxon>Primates</taxon>
        <taxon>Haplorrhini</taxon>
        <taxon>Catarrhini</taxon>
        <taxon>Hominidae</taxon>
        <taxon>Homo</taxon>
    </lineage>
</organism>
<gene>
    <name type="primary">STAP1</name>
    <name type="synonym">BRDG1</name>
</gene>
<sequence length="295" mass="34291">MMAKKPPKPAPRRIFQERLKITALPLYFEGFLLIKRSGYREYEHYWTELRGTTLFFYTDKKSIIYVDKLDIVDLTCLTEQNSTEKNCAKFTLVLPKEEVQLKTENTESGEEWRGFILTVTELSVPQNVSLLPGQVIKLHEVLEREKKRRIETEQSTSVEKEKEPTEDYVDVLNPMPACFYTVSRKEATEMLQKNPSLGNMILRPGSDSRNYSITIRQEIDIPRIKHYKVMSVGQNYTIELEKPVTLPNLFSVIDYFVKETRGNLRPFICSTDENTGQEPSMEGRSEKLKKNPHIA</sequence>
<accession>Q9ULZ2</accession>
<accession>B2R980</accession>
<evidence type="ECO:0000250" key="1"/>
<evidence type="ECO:0000250" key="2">
    <source>
        <dbReference type="UniProtKB" id="Q9JM90"/>
    </source>
</evidence>
<evidence type="ECO:0000255" key="3">
    <source>
        <dbReference type="PROSITE-ProRule" id="PRU00145"/>
    </source>
</evidence>
<evidence type="ECO:0000255" key="4">
    <source>
        <dbReference type="PROSITE-ProRule" id="PRU00191"/>
    </source>
</evidence>
<evidence type="ECO:0000256" key="5">
    <source>
        <dbReference type="SAM" id="MobiDB-lite"/>
    </source>
</evidence>
<evidence type="ECO:0000269" key="6">
    <source>
    </source>
</evidence>
<evidence type="ECO:0000269" key="7">
    <source>
    </source>
</evidence>
<evidence type="ECO:0007829" key="8">
    <source>
        <dbReference type="PDB" id="1X1F"/>
    </source>
</evidence>
<evidence type="ECO:0007829" key="9">
    <source>
        <dbReference type="PDB" id="3MAZ"/>
    </source>
</evidence>
<feature type="chain" id="PRO_0000072237" description="Signal-transducing adaptor protein 1">
    <location>
        <begin position="1"/>
        <end position="295"/>
    </location>
</feature>
<feature type="domain" description="PH" evidence="3">
    <location>
        <begin position="25"/>
        <end position="121"/>
    </location>
</feature>
<feature type="domain" description="SH2" evidence="4">
    <location>
        <begin position="177"/>
        <end position="280"/>
    </location>
</feature>
<feature type="region of interest" description="Disordered" evidence="5">
    <location>
        <begin position="270"/>
        <end position="295"/>
    </location>
</feature>
<feature type="modified residue" description="Phosphotyrosine" evidence="2">
    <location>
        <position position="168"/>
    </location>
</feature>
<feature type="strand" evidence="8">
    <location>
        <begin position="22"/>
        <end position="24"/>
    </location>
</feature>
<feature type="strand" evidence="8">
    <location>
        <begin position="26"/>
        <end position="35"/>
    </location>
</feature>
<feature type="strand" evidence="8">
    <location>
        <begin position="43"/>
        <end position="50"/>
    </location>
</feature>
<feature type="strand" evidence="8">
    <location>
        <begin position="53"/>
        <end position="58"/>
    </location>
</feature>
<feature type="strand" evidence="8">
    <location>
        <begin position="66"/>
        <end position="68"/>
    </location>
</feature>
<feature type="strand" evidence="8">
    <location>
        <begin position="76"/>
        <end position="79"/>
    </location>
</feature>
<feature type="strand" evidence="8">
    <location>
        <begin position="89"/>
        <end position="93"/>
    </location>
</feature>
<feature type="strand" evidence="8">
    <location>
        <begin position="99"/>
        <end position="102"/>
    </location>
</feature>
<feature type="helix" evidence="8">
    <location>
        <begin position="106"/>
        <end position="121"/>
    </location>
</feature>
<feature type="helix" evidence="8">
    <location>
        <begin position="132"/>
        <end position="149"/>
    </location>
</feature>
<feature type="helix" evidence="9">
    <location>
        <begin position="184"/>
        <end position="193"/>
    </location>
</feature>
<feature type="helix" evidence="9">
    <location>
        <begin position="195"/>
        <end position="197"/>
    </location>
</feature>
<feature type="strand" evidence="9">
    <location>
        <begin position="199"/>
        <end position="204"/>
    </location>
</feature>
<feature type="strand" evidence="9">
    <location>
        <begin position="208"/>
        <end position="217"/>
    </location>
</feature>
<feature type="strand" evidence="9">
    <location>
        <begin position="219"/>
        <end position="221"/>
    </location>
</feature>
<feature type="strand" evidence="9">
    <location>
        <begin position="223"/>
        <end position="232"/>
    </location>
</feature>
<feature type="strand" evidence="9">
    <location>
        <begin position="235"/>
        <end position="238"/>
    </location>
</feature>
<feature type="strand" evidence="9">
    <location>
        <begin position="240"/>
        <end position="242"/>
    </location>
</feature>
<feature type="strand" evidence="9">
    <location>
        <begin position="244"/>
        <end position="248"/>
    </location>
</feature>
<feature type="helix" evidence="9">
    <location>
        <begin position="249"/>
        <end position="259"/>
    </location>
</feature>
<feature type="turn" evidence="9">
    <location>
        <begin position="260"/>
        <end position="262"/>
    </location>
</feature>
<name>STAP1_HUMAN</name>
<protein>
    <recommendedName>
        <fullName>Signal-transducing adaptor protein 1</fullName>
        <shortName>STAP-1</shortName>
    </recommendedName>
    <alternativeName>
        <fullName>BCR downstream-signaling protein 1</fullName>
    </alternativeName>
    <alternativeName>
        <fullName>Docking protein BRDG1</fullName>
    </alternativeName>
    <alternativeName>
        <fullName>Stem cell adaptor protein 1</fullName>
    </alternativeName>
</protein>
<comment type="function">
    <text evidence="6">In BCR signaling, appears to function as a docking protein acting downstream of TEC and participates in a positive feedback loop by increasing the activity of TEC.</text>
</comment>
<comment type="subunit">
    <text evidence="1 7">Interacts with KIT and CSF1R (By similarity). Interacts with URI1; the interaction is phosphorylation-dependent and occurs in a growth-dependent manner.</text>
</comment>
<comment type="interaction">
    <interactant intactId="EBI-6083058">
        <id>Q9ULZ2</id>
    </interactant>
    <interactant intactId="EBI-608057">
        <id>P10275</id>
        <label>AR</label>
    </interactant>
    <organismsDiffer>false</organismsDiffer>
    <experiments>2</experiments>
</comment>
<comment type="interaction">
    <interactant intactId="EBI-6083058">
        <id>Q9ULZ2</id>
    </interactant>
    <interactant intactId="EBI-517684">
        <id>Q13480</id>
        <label>GAB1</label>
    </interactant>
    <organismsDiffer>false</organismsDiffer>
    <experiments>3</experiments>
</comment>
<comment type="interaction">
    <interactant intactId="EBI-6083058">
        <id>Q9ULZ2</id>
    </interactant>
    <interactant intactId="EBI-717919">
        <id>Q4V328</id>
        <label>GRIPAP1</label>
    </interactant>
    <organismsDiffer>false</organismsDiffer>
    <experiments>3</experiments>
</comment>
<comment type="interaction">
    <interactant intactId="EBI-6083058">
        <id>Q9ULZ2</id>
    </interactant>
    <interactant intactId="EBI-1379503">
        <id>P10721</id>
        <label>KIT</label>
    </interactant>
    <organismsDiffer>false</organismsDiffer>
    <experiments>3</experiments>
</comment>
<comment type="interaction">
    <interactant intactId="EBI-6083058">
        <id>Q9ULZ2</id>
    </interactant>
    <interactant intactId="EBI-1039152">
        <id>P08581</id>
        <label>MET</label>
    </interactant>
    <organismsDiffer>false</organismsDiffer>
    <experiments>3</experiments>
</comment>
<comment type="interaction">
    <interactant intactId="EBI-6083058">
        <id>Q9ULZ2</id>
    </interactant>
    <interactant intactId="EBI-10192441">
        <id>Q86VR2</id>
        <label>RETREG3</label>
    </interactant>
    <organismsDiffer>false</organismsDiffer>
    <experiments>8</experiments>
</comment>
<comment type="interaction">
    <interactant intactId="EBI-6083058">
        <id>Q9ULZ2</id>
    </interactant>
    <interactant intactId="EBI-346595">
        <id>Q96B97</id>
        <label>SH3KBP1</label>
    </interactant>
    <organismsDiffer>false</organismsDiffer>
    <experiments>7</experiments>
</comment>
<comment type="interaction">
    <interactant intactId="EBI-6083058">
        <id>Q9ULZ2</id>
    </interactant>
    <interactant intactId="EBI-10244213">
        <id>Q5JPT6</id>
    </interactant>
    <organismsDiffer>false</organismsDiffer>
    <experiments>5</experiments>
</comment>
<comment type="subcellular location">
    <subcellularLocation>
        <location evidence="7">Nucleus</location>
    </subcellularLocation>
    <subcellularLocation>
        <location evidence="7">Cytoplasm</location>
    </subcellularLocation>
    <subcellularLocation>
        <location evidence="7">Mitochondrion</location>
    </subcellularLocation>
</comment>
<comment type="PTM">
    <text evidence="1">Phosphorylated on tyrosine by TEC. Phosphorylated on tyrosine by KIT (By similarity).</text>
</comment>
<dbReference type="EMBL" id="AB023483">
    <property type="protein sequence ID" value="BAA85311.1"/>
    <property type="molecule type" value="mRNA"/>
</dbReference>
<dbReference type="EMBL" id="AK313676">
    <property type="protein sequence ID" value="BAG36427.1"/>
    <property type="molecule type" value="mRNA"/>
</dbReference>
<dbReference type="EMBL" id="CH471057">
    <property type="protein sequence ID" value="EAX05547.1"/>
    <property type="molecule type" value="Genomic_DNA"/>
</dbReference>
<dbReference type="EMBL" id="BC014958">
    <property type="protein sequence ID" value="AAH14958.1"/>
    <property type="molecule type" value="mRNA"/>
</dbReference>
<dbReference type="CCDS" id="CCDS3515.1"/>
<dbReference type="RefSeq" id="NP_001304698.1">
    <property type="nucleotide sequence ID" value="NM_001317769.2"/>
</dbReference>
<dbReference type="RefSeq" id="NP_036240.1">
    <property type="nucleotide sequence ID" value="NM_012108.4"/>
</dbReference>
<dbReference type="PDB" id="1X1F">
    <property type="method" value="NMR"/>
    <property type="chains" value="A=16-151"/>
</dbReference>
<dbReference type="PDB" id="3MAZ">
    <property type="method" value="X-ray"/>
    <property type="resolution" value="1.90 A"/>
    <property type="chains" value="A=167-285"/>
</dbReference>
<dbReference type="PDBsum" id="1X1F"/>
<dbReference type="PDBsum" id="3MAZ"/>
<dbReference type="SMR" id="Q9ULZ2"/>
<dbReference type="BioGRID" id="117619">
    <property type="interactions" value="21"/>
</dbReference>
<dbReference type="CORUM" id="Q9ULZ2"/>
<dbReference type="FunCoup" id="Q9ULZ2">
    <property type="interactions" value="770"/>
</dbReference>
<dbReference type="IntAct" id="Q9ULZ2">
    <property type="interactions" value="48"/>
</dbReference>
<dbReference type="MINT" id="Q9ULZ2"/>
<dbReference type="STRING" id="9606.ENSP00000265404"/>
<dbReference type="iPTMnet" id="Q9ULZ2"/>
<dbReference type="PhosphoSitePlus" id="Q9ULZ2"/>
<dbReference type="BioMuta" id="STAP1"/>
<dbReference type="DMDM" id="62511239"/>
<dbReference type="jPOST" id="Q9ULZ2"/>
<dbReference type="MassIVE" id="Q9ULZ2"/>
<dbReference type="PaxDb" id="9606-ENSP00000265404"/>
<dbReference type="PeptideAtlas" id="Q9ULZ2"/>
<dbReference type="ProteomicsDB" id="85157"/>
<dbReference type="TopDownProteomics" id="Q9ULZ2"/>
<dbReference type="Antibodypedia" id="24136">
    <property type="antibodies" value="215 antibodies from 21 providers"/>
</dbReference>
<dbReference type="DNASU" id="26228"/>
<dbReference type="Ensembl" id="ENST00000265404.7">
    <property type="protein sequence ID" value="ENSP00000265404.2"/>
    <property type="gene ID" value="ENSG00000035720.8"/>
</dbReference>
<dbReference type="Ensembl" id="ENST00000396225.1">
    <property type="protein sequence ID" value="ENSP00000379527.1"/>
    <property type="gene ID" value="ENSG00000035720.8"/>
</dbReference>
<dbReference type="GeneID" id="26228"/>
<dbReference type="KEGG" id="hsa:26228"/>
<dbReference type="MANE-Select" id="ENST00000265404.7">
    <property type="protein sequence ID" value="ENSP00000265404.2"/>
    <property type="RefSeq nucleotide sequence ID" value="NM_012108.4"/>
    <property type="RefSeq protein sequence ID" value="NP_036240.1"/>
</dbReference>
<dbReference type="UCSC" id="uc003hde.4">
    <property type="organism name" value="human"/>
</dbReference>
<dbReference type="AGR" id="HGNC:24133"/>
<dbReference type="CTD" id="26228"/>
<dbReference type="DisGeNET" id="26228"/>
<dbReference type="GeneCards" id="STAP1"/>
<dbReference type="HGNC" id="HGNC:24133">
    <property type="gene designation" value="STAP1"/>
</dbReference>
<dbReference type="HPA" id="ENSG00000035720">
    <property type="expression patterns" value="Tissue enriched (lymphoid)"/>
</dbReference>
<dbReference type="MalaCards" id="STAP1"/>
<dbReference type="MIM" id="604298">
    <property type="type" value="gene"/>
</dbReference>
<dbReference type="neXtProt" id="NX_Q9ULZ2"/>
<dbReference type="OpenTargets" id="ENSG00000035720"/>
<dbReference type="PharmGKB" id="PA162404948"/>
<dbReference type="VEuPathDB" id="HostDB:ENSG00000035720"/>
<dbReference type="eggNOG" id="ENOG502RZ9C">
    <property type="taxonomic scope" value="Eukaryota"/>
</dbReference>
<dbReference type="GeneTree" id="ENSGT00530000063841"/>
<dbReference type="HOGENOM" id="CLU_043957_1_0_1"/>
<dbReference type="InParanoid" id="Q9ULZ2"/>
<dbReference type="OMA" id="PLYFQGY"/>
<dbReference type="OrthoDB" id="6086001at2759"/>
<dbReference type="PAN-GO" id="Q9ULZ2">
    <property type="GO annotations" value="4 GO annotations based on evolutionary models"/>
</dbReference>
<dbReference type="PhylomeDB" id="Q9ULZ2"/>
<dbReference type="TreeFam" id="TF332087"/>
<dbReference type="PathwayCommons" id="Q9ULZ2"/>
<dbReference type="SignaLink" id="Q9ULZ2"/>
<dbReference type="SIGNOR" id="Q9ULZ2"/>
<dbReference type="BioGRID-ORCS" id="26228">
    <property type="hits" value="15 hits in 1156 CRISPR screens"/>
</dbReference>
<dbReference type="ChiTaRS" id="STAP1">
    <property type="organism name" value="human"/>
</dbReference>
<dbReference type="EvolutionaryTrace" id="Q9ULZ2"/>
<dbReference type="GeneWiki" id="STAP1"/>
<dbReference type="GenomeRNAi" id="26228"/>
<dbReference type="Pharos" id="Q9ULZ2">
    <property type="development level" value="Tbio"/>
</dbReference>
<dbReference type="PRO" id="PR:Q9ULZ2"/>
<dbReference type="Proteomes" id="UP000005640">
    <property type="component" value="Chromosome 4"/>
</dbReference>
<dbReference type="RNAct" id="Q9ULZ2">
    <property type="molecule type" value="protein"/>
</dbReference>
<dbReference type="Bgee" id="ENSG00000035720">
    <property type="expression patterns" value="Expressed in lymph node and 101 other cell types or tissues"/>
</dbReference>
<dbReference type="ExpressionAtlas" id="Q9ULZ2">
    <property type="expression patterns" value="baseline and differential"/>
</dbReference>
<dbReference type="GO" id="GO:0005737">
    <property type="term" value="C:cytoplasm"/>
    <property type="evidence" value="ECO:0000314"/>
    <property type="project" value="UniProtKB"/>
</dbReference>
<dbReference type="GO" id="GO:0005829">
    <property type="term" value="C:cytosol"/>
    <property type="evidence" value="ECO:0000314"/>
    <property type="project" value="HPA"/>
</dbReference>
<dbReference type="GO" id="GO:0005739">
    <property type="term" value="C:mitochondrion"/>
    <property type="evidence" value="ECO:0000314"/>
    <property type="project" value="UniProtKB"/>
</dbReference>
<dbReference type="GO" id="GO:0016604">
    <property type="term" value="C:nuclear body"/>
    <property type="evidence" value="ECO:0000314"/>
    <property type="project" value="HPA"/>
</dbReference>
<dbReference type="GO" id="GO:0005634">
    <property type="term" value="C:nucleus"/>
    <property type="evidence" value="ECO:0000314"/>
    <property type="project" value="UniProtKB"/>
</dbReference>
<dbReference type="GO" id="GO:0032991">
    <property type="term" value="C:protein-containing complex"/>
    <property type="evidence" value="ECO:0000314"/>
    <property type="project" value="MGI"/>
</dbReference>
<dbReference type="GO" id="GO:0005157">
    <property type="term" value="F:macrophage colony-stimulating factor receptor binding"/>
    <property type="evidence" value="ECO:0007669"/>
    <property type="project" value="Ensembl"/>
</dbReference>
<dbReference type="GO" id="GO:0005543">
    <property type="term" value="F:phospholipid binding"/>
    <property type="evidence" value="ECO:0000303"/>
    <property type="project" value="BHF-UCL"/>
</dbReference>
<dbReference type="GO" id="GO:0001784">
    <property type="term" value="F:phosphotyrosine residue binding"/>
    <property type="evidence" value="ECO:0000353"/>
    <property type="project" value="BHF-UCL"/>
</dbReference>
<dbReference type="GO" id="GO:0019901">
    <property type="term" value="F:protein kinase binding"/>
    <property type="evidence" value="ECO:0000353"/>
    <property type="project" value="BHF-UCL"/>
</dbReference>
<dbReference type="GO" id="GO:0030296">
    <property type="term" value="F:protein tyrosine kinase activator activity"/>
    <property type="evidence" value="ECO:0000314"/>
    <property type="project" value="BHF-UCL"/>
</dbReference>
<dbReference type="GO" id="GO:0035591">
    <property type="term" value="F:signaling adaptor activity"/>
    <property type="evidence" value="ECO:0000353"/>
    <property type="project" value="BHF-UCL"/>
</dbReference>
<dbReference type="GO" id="GO:0005068">
    <property type="term" value="F:transmembrane receptor protein tyrosine kinase adaptor activity"/>
    <property type="evidence" value="ECO:0000250"/>
    <property type="project" value="BHF-UCL"/>
</dbReference>
<dbReference type="GO" id="GO:0007169">
    <property type="term" value="P:cell surface receptor protein tyrosine kinase signaling pathway"/>
    <property type="evidence" value="ECO:0000250"/>
    <property type="project" value="BHF-UCL"/>
</dbReference>
<dbReference type="GO" id="GO:0071222">
    <property type="term" value="P:cellular response to lipopolysaccharide"/>
    <property type="evidence" value="ECO:0000250"/>
    <property type="project" value="BHF-UCL"/>
</dbReference>
<dbReference type="GO" id="GO:0010760">
    <property type="term" value="P:negative regulation of macrophage chemotaxis"/>
    <property type="evidence" value="ECO:0000250"/>
    <property type="project" value="BHF-UCL"/>
</dbReference>
<dbReference type="GO" id="GO:1902227">
    <property type="term" value="P:negative regulation of macrophage colony-stimulating factor signaling pathway"/>
    <property type="evidence" value="ECO:0000250"/>
    <property type="project" value="BHF-UCL"/>
</dbReference>
<dbReference type="GO" id="GO:1904140">
    <property type="term" value="P:negative regulation of microglial cell migration"/>
    <property type="evidence" value="ECO:0007669"/>
    <property type="project" value="Ensembl"/>
</dbReference>
<dbReference type="GO" id="GO:1900028">
    <property type="term" value="P:negative regulation of ruffle assembly"/>
    <property type="evidence" value="ECO:0000250"/>
    <property type="project" value="BHF-UCL"/>
</dbReference>
<dbReference type="GO" id="GO:0050861">
    <property type="term" value="P:positive regulation of B cell receptor signaling pathway"/>
    <property type="evidence" value="ECO:0000314"/>
    <property type="project" value="BHF-UCL"/>
</dbReference>
<dbReference type="GO" id="GO:0010628">
    <property type="term" value="P:positive regulation of gene expression"/>
    <property type="evidence" value="ECO:0000250"/>
    <property type="project" value="BHF-UCL"/>
</dbReference>
<dbReference type="GO" id="GO:1903980">
    <property type="term" value="P:positive regulation of microglial cell activation"/>
    <property type="evidence" value="ECO:0000250"/>
    <property type="project" value="BHF-UCL"/>
</dbReference>
<dbReference type="GO" id="GO:1904151">
    <property type="term" value="P:positive regulation of microglial cell mediated cytotoxicity"/>
    <property type="evidence" value="ECO:0000250"/>
    <property type="project" value="BHF-UCL"/>
</dbReference>
<dbReference type="GO" id="GO:0060100">
    <property type="term" value="P:positive regulation of phagocytosis, engulfment"/>
    <property type="evidence" value="ECO:0000250"/>
    <property type="project" value="BHF-UCL"/>
</dbReference>
<dbReference type="CDD" id="cd13268">
    <property type="entry name" value="PH_Brdg1"/>
    <property type="match status" value="1"/>
</dbReference>
<dbReference type="CDD" id="cd10403">
    <property type="entry name" value="SH2_STAP1"/>
    <property type="match status" value="1"/>
</dbReference>
<dbReference type="FunFam" id="2.30.29.30:FF:000392">
    <property type="entry name" value="Signal transducing adaptor family member 1"/>
    <property type="match status" value="1"/>
</dbReference>
<dbReference type="FunFam" id="3.30.505.10:FF:000084">
    <property type="entry name" value="Signal transducing adaptor family member 1"/>
    <property type="match status" value="1"/>
</dbReference>
<dbReference type="Gene3D" id="2.30.29.30">
    <property type="entry name" value="Pleckstrin-homology domain (PH domain)/Phosphotyrosine-binding domain (PTB)"/>
    <property type="match status" value="1"/>
</dbReference>
<dbReference type="Gene3D" id="3.30.505.10">
    <property type="entry name" value="SH2 domain"/>
    <property type="match status" value="1"/>
</dbReference>
<dbReference type="InterPro" id="IPR011993">
    <property type="entry name" value="PH-like_dom_sf"/>
</dbReference>
<dbReference type="InterPro" id="IPR001849">
    <property type="entry name" value="PH_domain"/>
</dbReference>
<dbReference type="InterPro" id="IPR000980">
    <property type="entry name" value="SH2"/>
</dbReference>
<dbReference type="InterPro" id="IPR036860">
    <property type="entry name" value="SH2_dom_sf"/>
</dbReference>
<dbReference type="InterPro" id="IPR039111">
    <property type="entry name" value="STAP1/STAP2"/>
</dbReference>
<dbReference type="InterPro" id="IPR035877">
    <property type="entry name" value="STAP1_SH2"/>
</dbReference>
<dbReference type="PANTHER" id="PTHR16186:SF10">
    <property type="entry name" value="SIGNAL-TRANSDUCING ADAPTOR PROTEIN 1"/>
    <property type="match status" value="1"/>
</dbReference>
<dbReference type="PANTHER" id="PTHR16186">
    <property type="entry name" value="SIGNAL-TRANSDUCING ADAPTOR PROTEIN-RELATED"/>
    <property type="match status" value="1"/>
</dbReference>
<dbReference type="Pfam" id="PF00169">
    <property type="entry name" value="PH"/>
    <property type="match status" value="1"/>
</dbReference>
<dbReference type="Pfam" id="PF00017">
    <property type="entry name" value="SH2"/>
    <property type="match status" value="1"/>
</dbReference>
<dbReference type="SMART" id="SM00233">
    <property type="entry name" value="PH"/>
    <property type="match status" value="1"/>
</dbReference>
<dbReference type="SMART" id="SM00252">
    <property type="entry name" value="SH2"/>
    <property type="match status" value="1"/>
</dbReference>
<dbReference type="SUPFAM" id="SSF50729">
    <property type="entry name" value="PH domain-like"/>
    <property type="match status" value="1"/>
</dbReference>
<dbReference type="SUPFAM" id="SSF55550">
    <property type="entry name" value="SH2 domain"/>
    <property type="match status" value="1"/>
</dbReference>
<dbReference type="PROSITE" id="PS50003">
    <property type="entry name" value="PH_DOMAIN"/>
    <property type="match status" value="1"/>
</dbReference>
<dbReference type="PROSITE" id="PS50001">
    <property type="entry name" value="SH2"/>
    <property type="match status" value="1"/>
</dbReference>